<feature type="propeptide" id="PRO_0000349138">
    <location>
        <begin position="1"/>
        <end position="10"/>
    </location>
</feature>
<feature type="peptide" id="PRO_0000349139" description="Alpha-amanitin">
    <location>
        <begin position="11"/>
        <end position="18"/>
    </location>
</feature>
<feature type="propeptide" id="PRO_0000349140">
    <location>
        <begin position="19"/>
        <end position="35"/>
    </location>
</feature>
<feature type="modified residue" description="(3R,4R)-4,5-dihydroxyisoleucine; in form alpha-amanitin" evidence="2">
    <location>
        <position position="11"/>
    </location>
</feature>
<feature type="modified residue" description="(3R,4S)-4-hydroxyisoleucine; in form gamma-amanitin" evidence="2">
    <location>
        <position position="11"/>
    </location>
</feature>
<feature type="modified residue" description="4-hydroxyproline" evidence="2">
    <location>
        <position position="18"/>
    </location>
</feature>
<feature type="cross-link" description="Cyclopeptide (Ile-Pro)" evidence="2">
    <location>
        <begin position="11"/>
        <end position="18"/>
    </location>
</feature>
<feature type="cross-link" description="2'-cysteinyl-6'-hydroxytryptophan sulfoxide (Trp-Cys)" evidence="2">
    <location>
        <begin position="12"/>
        <end position="16"/>
    </location>
</feature>
<dbReference type="EMBL" id="EU196139">
    <property type="protein sequence ID" value="ABW87768.1"/>
    <property type="molecule type" value="Genomic_DNA"/>
</dbReference>
<dbReference type="EMBL" id="EU196140">
    <property type="protein sequence ID" value="ABW87769.1"/>
    <property type="molecule type" value="mRNA"/>
</dbReference>
<dbReference type="GO" id="GO:0090729">
    <property type="term" value="F:toxin activity"/>
    <property type="evidence" value="ECO:0007669"/>
    <property type="project" value="UniProtKB-KW"/>
</dbReference>
<dbReference type="InterPro" id="IPR027582">
    <property type="entry name" value="Amanitin/phalloidin"/>
</dbReference>
<dbReference type="NCBIfam" id="TIGR04309">
    <property type="entry name" value="amanitin"/>
    <property type="match status" value="1"/>
</dbReference>
<dbReference type="Pfam" id="PF24112">
    <property type="entry name" value="Amanitin"/>
    <property type="match status" value="1"/>
</dbReference>
<name>AAMAT_AMABI</name>
<reference key="1">
    <citation type="journal article" date="2007" name="Proc. Natl. Acad. Sci. U.S.A.">
        <title>Gene family encoding the major toxins of lethal Amanita mushrooms.</title>
        <authorList>
            <person name="Hallen H.E."/>
            <person name="Luo H."/>
            <person name="Scott-Craig J.S."/>
            <person name="Walton J.D."/>
        </authorList>
    </citation>
    <scope>NUCLEOTIDE SEQUENCE [GENOMIC DNA / MRNA]</scope>
    <scope>FUNCTION</scope>
</reference>
<reference key="2">
    <citation type="journal article" date="1995" name="J. Biol. Chem.">
        <title>Action of alpha-amanitin during pyrophosphorolysis and elongation by RNA polymerase II.</title>
        <authorList>
            <person name="Chafin D.R."/>
            <person name="Guo H."/>
            <person name="Price D.H."/>
        </authorList>
    </citation>
    <scope>FUNCTION</scope>
</reference>
<reference key="3">
    <citation type="journal article" date="1996" name="J. Biol. Chem.">
        <title>Amanitin greatly reduces the rate of transcription by RNA polymerase II ternary complexes but fails to inhibit some transcript cleavage modes.</title>
        <authorList>
            <person name="Rudd M.D."/>
            <person name="Luse D.S."/>
        </authorList>
    </citation>
    <scope>FUNCTION</scope>
</reference>
<reference key="4">
    <citation type="journal article" date="2002" name="J. Toxicol. Clin. Toxicol.">
        <title>Treatment of amatoxin poisoning: 20-year retrospective analysis.</title>
        <authorList>
            <person name="Enjalbert F."/>
            <person name="Rapior S."/>
            <person name="Nouguier-Soule J."/>
            <person name="Guillon S."/>
            <person name="Amouroux N."/>
            <person name="Cabot C."/>
        </authorList>
    </citation>
    <scope>REVIEW ON TOXICITY</scope>
</reference>
<sequence>MSDINATRLPIWGIGCNPCVGDDVTTLLTRGEALC</sequence>
<protein>
    <recommendedName>
        <fullName evidence="6">Alpha-amanitin proprotein</fullName>
    </recommendedName>
    <component>
        <recommendedName>
            <fullName evidence="6">Alpha-amanitin</fullName>
        </recommendedName>
        <alternativeName>
            <fullName evidence="6">Amatoxin</fullName>
        </alternativeName>
        <alternativeName>
            <fullName evidence="2">Gamma-amanitin</fullName>
        </alternativeName>
    </component>
</protein>
<organism>
    <name type="scientific">Amanita bisporigera</name>
    <name type="common">Destroying angel</name>
    <dbReference type="NCBI Taxonomy" id="87325"/>
    <lineage>
        <taxon>Eukaryota</taxon>
        <taxon>Fungi</taxon>
        <taxon>Dikarya</taxon>
        <taxon>Basidiomycota</taxon>
        <taxon>Agaricomycotina</taxon>
        <taxon>Agaricomycetes</taxon>
        <taxon>Agaricomycetidae</taxon>
        <taxon>Agaricales</taxon>
        <taxon>Pluteineae</taxon>
        <taxon>Amanitaceae</taxon>
        <taxon>Amanita</taxon>
    </lineage>
</organism>
<evidence type="ECO:0000250" key="1">
    <source>
        <dbReference type="UniProtKB" id="A0A067SLB9"/>
    </source>
</evidence>
<evidence type="ECO:0000250" key="2">
    <source>
        <dbReference type="UniProtKB" id="P85421"/>
    </source>
</evidence>
<evidence type="ECO:0000269" key="3">
    <source>
    </source>
</evidence>
<evidence type="ECO:0000269" key="4">
    <source>
    </source>
</evidence>
<evidence type="ECO:0000303" key="5">
    <source>
    </source>
</evidence>
<evidence type="ECO:0000303" key="6">
    <source>
    </source>
</evidence>
<evidence type="ECO:0000305" key="7"/>
<evidence type="ECO:0000305" key="8">
    <source>
    </source>
</evidence>
<keyword id="KW-0379">Hydroxylation</keyword>
<keyword id="KW-0883">Thioether bond</keyword>
<keyword id="KW-0800">Toxin</keyword>
<comment type="function">
    <text evidence="3 4 8">Major toxin belonging to the bicyclic octapeptides amatoxins that acts by binding non-competitively to RNA polymerase II and greatly slowing the elongation of transcripts from target promoters (PubMed:18025465, PubMed:7642577, PubMed:8702941).</text>
</comment>
<comment type="PTM">
    <text evidence="1">Processed by the macrocyclase-peptidase enzyme POPB to yield a toxic cyclic decapeptide (By similarity). POPB first removes 10 residues from the N-terminus (By similarity). Conformational trapping of the remaining peptide forces the enzyme to release this intermediate rather than proceed to macrocyclization (By similarity). The enzyme rebinds the remaining peptide in a different conformation and catalyzes macrocyclization of the N-terminal 8 residues (By similarity).</text>
</comment>
<comment type="miscellaneous">
    <text evidence="5">The typical symptoms of amatoxin poisoning are gastro-intestinal distress beginning 6-12 hours after ingestion, a remission phase lasting 12-24 hours, and progressive loss of liver function culminating in death within 3-5 days (PubMed:12475187). One of the few effective treatments is liver transplantation (PubMed:12475187).</text>
</comment>
<comment type="similarity">
    <text evidence="7">Belongs to the MSDIN fungal toxin family.</text>
</comment>
<proteinExistence type="inferred from homology"/>
<gene>
    <name evidence="6" type="primary">AMA1</name>
</gene>
<accession>A8W7M4</accession>